<proteinExistence type="evidence at transcript level"/>
<reference key="1">
    <citation type="journal article" date="2002" name="J. Allergy Clin. Immunol.">
        <title>The bee venom protease allergen contains a CUB domain.</title>
        <authorList>
            <person name="Schmidt M."/>
            <person name="Winningham K.M."/>
            <person name="Hoffman D.R."/>
        </authorList>
    </citation>
    <scope>NUCLEOTIDE SEQUENCE [MRNA]</scope>
</reference>
<reference key="2">
    <citation type="journal article" date="2006" name="Nature">
        <title>Insights into social insects from the genome of the honeybee Apis mellifera.</title>
        <authorList>
            <consortium name="Honeybee genome sequencing consortium"/>
        </authorList>
    </citation>
    <scope>NUCLEOTIDE SEQUENCE [LARGE SCALE GENOMIC DNA]</scope>
</reference>
<evidence type="ECO:0000250" key="1"/>
<evidence type="ECO:0000255" key="2"/>
<evidence type="ECO:0000255" key="3">
    <source>
        <dbReference type="PROSITE-ProRule" id="PRU00274"/>
    </source>
</evidence>
<keyword id="KW-0020">Allergen</keyword>
<keyword id="KW-1015">Disulfide bond</keyword>
<keyword id="KW-0325">Glycoprotein</keyword>
<keyword id="KW-0378">Hydrolase</keyword>
<keyword id="KW-0645">Protease</keyword>
<keyword id="KW-1185">Reference proteome</keyword>
<keyword id="KW-0964">Secreted</keyword>
<keyword id="KW-0720">Serine protease</keyword>
<keyword id="KW-0732">Signal</keyword>
<sequence>MIFTNNIAAFQNVVLVKKVKIVLLIFYGSIMFSMTQVNKEECDYYQNLNLGEIYYIYNPRYPLPYSGSKCTWTITSYHRINLKCSLVEFSENKNCNAGSLTVKKNFANKYCGNITLNIESTSNKMTVILTPPGRFFCEVRPIKRVKDSTNCNCGWKNPSRIVGGTNTGINEFPMMAGIKRTYEPGMICGATIISKRYVLTAAHCIIDENTTKLAIVVGEHDWSSKTETNATVLHSINKVIIHPKYDIIEKDDWQINDIALLKTEKDIKFGDKVGPACLPFQHFLDSFAGSDVTVLGWGHTSFNGMLSHILQKTTLNMLTQVECYKYYGNIMVNAMCAYAKGKDACQMDSGGPVLWQNPRTKRLVNIGIISWGAECGKYPNGNTKVGSYIDWIVSQTPDAEYCVIE</sequence>
<protein>
    <recommendedName>
        <fullName>Venom serine protease 34</fullName>
        <shortName>SP34</shortName>
        <ecNumber>3.4.21.-</ecNumber>
    </recommendedName>
    <allergenName>Api m 7</allergenName>
</protein>
<dbReference type="EC" id="3.4.21.-"/>
<dbReference type="EMBL" id="AY127579">
    <property type="protein sequence ID" value="AAN02286.1"/>
    <property type="molecule type" value="mRNA"/>
</dbReference>
<dbReference type="RefSeq" id="NP_001011584.1">
    <property type="nucleotide sequence ID" value="NM_001011584.1"/>
</dbReference>
<dbReference type="SMR" id="Q8MQS8"/>
<dbReference type="FunCoup" id="Q8MQS8">
    <property type="interactions" value="1"/>
</dbReference>
<dbReference type="STRING" id="7460.Q8MQS8"/>
<dbReference type="Allergome" id="3093">
    <property type="allergen name" value="Api m 7.0101"/>
</dbReference>
<dbReference type="Allergome" id="732">
    <property type="allergen name" value="Api m 7"/>
</dbReference>
<dbReference type="MEROPS" id="S01.492"/>
<dbReference type="PaxDb" id="7460-GB48510-PA"/>
<dbReference type="EnsemblMetazoa" id="NM_001011584">
    <property type="protein sequence ID" value="NP_001011584"/>
    <property type="gene ID" value="GeneID_406095"/>
</dbReference>
<dbReference type="GeneID" id="406095"/>
<dbReference type="KEGG" id="ame:406095"/>
<dbReference type="CTD" id="406095"/>
<dbReference type="eggNOG" id="KOG3627">
    <property type="taxonomic scope" value="Eukaryota"/>
</dbReference>
<dbReference type="InParanoid" id="Q8MQS8"/>
<dbReference type="OrthoDB" id="6380398at2759"/>
<dbReference type="PhylomeDB" id="Q8MQS8"/>
<dbReference type="Proteomes" id="UP000005203">
    <property type="component" value="Linkage group LG13"/>
</dbReference>
<dbReference type="GO" id="GO:0005576">
    <property type="term" value="C:extracellular region"/>
    <property type="evidence" value="ECO:0007669"/>
    <property type="project" value="UniProtKB-SubCell"/>
</dbReference>
<dbReference type="GO" id="GO:0004252">
    <property type="term" value="F:serine-type endopeptidase activity"/>
    <property type="evidence" value="ECO:0007669"/>
    <property type="project" value="InterPro"/>
</dbReference>
<dbReference type="GO" id="GO:0006508">
    <property type="term" value="P:proteolysis"/>
    <property type="evidence" value="ECO:0007669"/>
    <property type="project" value="UniProtKB-KW"/>
</dbReference>
<dbReference type="CDD" id="cd00041">
    <property type="entry name" value="CUB"/>
    <property type="match status" value="1"/>
</dbReference>
<dbReference type="CDD" id="cd00190">
    <property type="entry name" value="Tryp_SPc"/>
    <property type="match status" value="1"/>
</dbReference>
<dbReference type="FunFam" id="2.40.10.10:FF:000015">
    <property type="entry name" value="Atrial natriuretic peptide-converting enzyme"/>
    <property type="match status" value="1"/>
</dbReference>
<dbReference type="Gene3D" id="2.60.120.290">
    <property type="entry name" value="Spermadhesin, CUB domain"/>
    <property type="match status" value="1"/>
</dbReference>
<dbReference type="Gene3D" id="2.40.10.10">
    <property type="entry name" value="Trypsin-like serine proteases"/>
    <property type="match status" value="1"/>
</dbReference>
<dbReference type="InterPro" id="IPR000859">
    <property type="entry name" value="CUB_dom"/>
</dbReference>
<dbReference type="InterPro" id="IPR009003">
    <property type="entry name" value="Peptidase_S1_PA"/>
</dbReference>
<dbReference type="InterPro" id="IPR043504">
    <property type="entry name" value="Peptidase_S1_PA_chymotrypsin"/>
</dbReference>
<dbReference type="InterPro" id="IPR001314">
    <property type="entry name" value="Peptidase_S1A"/>
</dbReference>
<dbReference type="InterPro" id="IPR051487">
    <property type="entry name" value="Ser/Thr_Proteases_Immune/Dev"/>
</dbReference>
<dbReference type="InterPro" id="IPR035914">
    <property type="entry name" value="Sperma_CUB_dom_sf"/>
</dbReference>
<dbReference type="InterPro" id="IPR001254">
    <property type="entry name" value="Trypsin_dom"/>
</dbReference>
<dbReference type="InterPro" id="IPR018114">
    <property type="entry name" value="TRYPSIN_HIS"/>
</dbReference>
<dbReference type="PANTHER" id="PTHR24256">
    <property type="entry name" value="TRYPTASE-RELATED"/>
    <property type="match status" value="1"/>
</dbReference>
<dbReference type="Pfam" id="PF00431">
    <property type="entry name" value="CUB"/>
    <property type="match status" value="1"/>
</dbReference>
<dbReference type="Pfam" id="PF00089">
    <property type="entry name" value="Trypsin"/>
    <property type="match status" value="1"/>
</dbReference>
<dbReference type="PRINTS" id="PR00722">
    <property type="entry name" value="CHYMOTRYPSIN"/>
</dbReference>
<dbReference type="SMART" id="SM00020">
    <property type="entry name" value="Tryp_SPc"/>
    <property type="match status" value="1"/>
</dbReference>
<dbReference type="SUPFAM" id="SSF49854">
    <property type="entry name" value="Spermadhesin, CUB domain"/>
    <property type="match status" value="1"/>
</dbReference>
<dbReference type="SUPFAM" id="SSF50494">
    <property type="entry name" value="Trypsin-like serine proteases"/>
    <property type="match status" value="1"/>
</dbReference>
<dbReference type="PROSITE" id="PS50240">
    <property type="entry name" value="TRYPSIN_DOM"/>
    <property type="match status" value="1"/>
</dbReference>
<dbReference type="PROSITE" id="PS00134">
    <property type="entry name" value="TRYPSIN_HIS"/>
    <property type="match status" value="1"/>
</dbReference>
<feature type="signal peptide" evidence="2">
    <location>
        <begin position="1"/>
        <end position="35"/>
    </location>
</feature>
<feature type="chain" id="PRO_5000088947" description="Venom serine protease 34">
    <location>
        <begin position="36"/>
        <end position="405"/>
    </location>
</feature>
<feature type="domain" description="CUB">
    <location>
        <begin position="42"/>
        <end position="147"/>
    </location>
</feature>
<feature type="domain" description="Peptidase S1" evidence="3">
    <location>
        <begin position="161"/>
        <end position="397"/>
    </location>
</feature>
<feature type="active site" description="Charge relay system" evidence="1">
    <location>
        <position position="203"/>
    </location>
</feature>
<feature type="active site" description="Charge relay system" evidence="1">
    <location>
        <position position="257"/>
    </location>
</feature>
<feature type="active site" description="Charge relay system" evidence="1">
    <location>
        <position position="349"/>
    </location>
</feature>
<feature type="glycosylation site" description="N-linked (GlcNAc...) asparagine" evidence="2">
    <location>
        <position position="113"/>
    </location>
</feature>
<feature type="glycosylation site" description="N-linked (GlcNAc...) asparagine" evidence="2">
    <location>
        <position position="209"/>
    </location>
</feature>
<feature type="glycosylation site" description="N-linked (GlcNAc...) asparagine" evidence="2">
    <location>
        <position position="229"/>
    </location>
</feature>
<feature type="disulfide bond" evidence="3">
    <location>
        <begin position="42"/>
        <end position="70"/>
    </location>
</feature>
<feature type="disulfide bond" evidence="3">
    <location>
        <begin position="95"/>
        <end position="111"/>
    </location>
</feature>
<feature type="disulfide bond" evidence="3">
    <location>
        <begin position="188"/>
        <end position="204"/>
    </location>
</feature>
<feature type="disulfide bond" evidence="3">
    <location>
        <begin position="323"/>
        <end position="336"/>
    </location>
</feature>
<feature type="disulfide bond" evidence="3">
    <location>
        <begin position="345"/>
        <end position="375"/>
    </location>
</feature>
<name>SP34_APIME</name>
<comment type="subcellular location">
    <subcellularLocation>
        <location evidence="1">Secreted</location>
    </subcellularLocation>
</comment>
<comment type="tissue specificity">
    <text>Expressed by the venom duct.</text>
</comment>
<comment type="allergen">
    <text evidence="1">Causes an allergic reaction in human.</text>
</comment>
<comment type="similarity">
    <text evidence="3">Belongs to the peptidase S1 family.</text>
</comment>
<accession>Q8MQS8</accession>
<organism>
    <name type="scientific">Apis mellifera</name>
    <name type="common">Honeybee</name>
    <dbReference type="NCBI Taxonomy" id="7460"/>
    <lineage>
        <taxon>Eukaryota</taxon>
        <taxon>Metazoa</taxon>
        <taxon>Ecdysozoa</taxon>
        <taxon>Arthropoda</taxon>
        <taxon>Hexapoda</taxon>
        <taxon>Insecta</taxon>
        <taxon>Pterygota</taxon>
        <taxon>Neoptera</taxon>
        <taxon>Endopterygota</taxon>
        <taxon>Hymenoptera</taxon>
        <taxon>Apocrita</taxon>
        <taxon>Aculeata</taxon>
        <taxon>Apoidea</taxon>
        <taxon>Anthophila</taxon>
        <taxon>Apidae</taxon>
        <taxon>Apis</taxon>
    </lineage>
</organism>